<sequence length="265" mass="29180">MDDIRYADRIVSADEVKIAARKAQVFYGSNHALRDVDVDILGKTVTAFIGPSGCGKSTFLRCLNRMNDTIPGCRVEGKITLDGQDIYDTRVDPVQLRAKVGMVFQKPNPFPKSIYDNVAYGPRIHGLARSKAEIDEIVEGALRRAALWNEAKDRLSSPGTGLSGGQQQRLCIARAIATSPEVLLMDEPCSALDPIATAQIEELIDELRAQFSVVIVTHSMQQAARVSQRTAFFHLGRLVEYGETGQIFTNPRDPRTESYISGRIG</sequence>
<reference key="1">
    <citation type="submission" date="2005-09" db="EMBL/GenBank/DDBJ databases">
        <title>Complete sequence of chromosome 1 of Rhodobacter sphaeroides 2.4.1.</title>
        <authorList>
            <person name="Copeland A."/>
            <person name="Lucas S."/>
            <person name="Lapidus A."/>
            <person name="Barry K."/>
            <person name="Detter J.C."/>
            <person name="Glavina T."/>
            <person name="Hammon N."/>
            <person name="Israni S."/>
            <person name="Pitluck S."/>
            <person name="Richardson P."/>
            <person name="Mackenzie C."/>
            <person name="Choudhary M."/>
            <person name="Larimer F."/>
            <person name="Hauser L.J."/>
            <person name="Land M."/>
            <person name="Donohue T.J."/>
            <person name="Kaplan S."/>
        </authorList>
    </citation>
    <scope>NUCLEOTIDE SEQUENCE [LARGE SCALE GENOMIC DNA]</scope>
    <source>
        <strain>ATCC 17023 / DSM 158 / JCM 6121 / CCUG 31486 / LMG 2827 / NBRC 12203 / NCIMB 8253 / ATH 2.4.1.</strain>
    </source>
</reference>
<evidence type="ECO:0000255" key="1">
    <source>
        <dbReference type="HAMAP-Rule" id="MF_01702"/>
    </source>
</evidence>
<dbReference type="EC" id="7.3.2.1" evidence="1"/>
<dbReference type="EMBL" id="CP000143">
    <property type="protein sequence ID" value="ABA78758.1"/>
    <property type="molecule type" value="Genomic_DNA"/>
</dbReference>
<dbReference type="RefSeq" id="WP_011337598.1">
    <property type="nucleotide sequence ID" value="NZ_CP030271.1"/>
</dbReference>
<dbReference type="RefSeq" id="YP_352659.1">
    <property type="nucleotide sequence ID" value="NC_007493.2"/>
</dbReference>
<dbReference type="SMR" id="Q3J376"/>
<dbReference type="STRING" id="272943.RSP_2601"/>
<dbReference type="EnsemblBacteria" id="ABA78758">
    <property type="protein sequence ID" value="ABA78758"/>
    <property type="gene ID" value="RSP_2601"/>
</dbReference>
<dbReference type="GeneID" id="3720273"/>
<dbReference type="KEGG" id="rsp:RSP_2601"/>
<dbReference type="PATRIC" id="fig|272943.9.peg.1519"/>
<dbReference type="eggNOG" id="COG1117">
    <property type="taxonomic scope" value="Bacteria"/>
</dbReference>
<dbReference type="OrthoDB" id="9802264at2"/>
<dbReference type="PhylomeDB" id="Q3J376"/>
<dbReference type="Proteomes" id="UP000002703">
    <property type="component" value="Chromosome 1"/>
</dbReference>
<dbReference type="GO" id="GO:0005886">
    <property type="term" value="C:plasma membrane"/>
    <property type="evidence" value="ECO:0007669"/>
    <property type="project" value="UniProtKB-SubCell"/>
</dbReference>
<dbReference type="GO" id="GO:0005524">
    <property type="term" value="F:ATP binding"/>
    <property type="evidence" value="ECO:0007669"/>
    <property type="project" value="UniProtKB-KW"/>
</dbReference>
<dbReference type="GO" id="GO:0016887">
    <property type="term" value="F:ATP hydrolysis activity"/>
    <property type="evidence" value="ECO:0007669"/>
    <property type="project" value="InterPro"/>
</dbReference>
<dbReference type="GO" id="GO:0015415">
    <property type="term" value="F:ATPase-coupled phosphate ion transmembrane transporter activity"/>
    <property type="evidence" value="ECO:0007669"/>
    <property type="project" value="UniProtKB-EC"/>
</dbReference>
<dbReference type="GO" id="GO:0035435">
    <property type="term" value="P:phosphate ion transmembrane transport"/>
    <property type="evidence" value="ECO:0007669"/>
    <property type="project" value="InterPro"/>
</dbReference>
<dbReference type="CDD" id="cd03260">
    <property type="entry name" value="ABC_PstB_phosphate_transporter"/>
    <property type="match status" value="1"/>
</dbReference>
<dbReference type="Gene3D" id="3.40.50.300">
    <property type="entry name" value="P-loop containing nucleotide triphosphate hydrolases"/>
    <property type="match status" value="1"/>
</dbReference>
<dbReference type="InterPro" id="IPR003593">
    <property type="entry name" value="AAA+_ATPase"/>
</dbReference>
<dbReference type="InterPro" id="IPR003439">
    <property type="entry name" value="ABC_transporter-like_ATP-bd"/>
</dbReference>
<dbReference type="InterPro" id="IPR017871">
    <property type="entry name" value="ABC_transporter-like_CS"/>
</dbReference>
<dbReference type="InterPro" id="IPR027417">
    <property type="entry name" value="P-loop_NTPase"/>
</dbReference>
<dbReference type="InterPro" id="IPR005670">
    <property type="entry name" value="PstB-like"/>
</dbReference>
<dbReference type="NCBIfam" id="TIGR00972">
    <property type="entry name" value="3a0107s01c2"/>
    <property type="match status" value="1"/>
</dbReference>
<dbReference type="PANTHER" id="PTHR43423">
    <property type="entry name" value="ABC TRANSPORTER I FAMILY MEMBER 17"/>
    <property type="match status" value="1"/>
</dbReference>
<dbReference type="PANTHER" id="PTHR43423:SF1">
    <property type="entry name" value="ABC TRANSPORTER I FAMILY MEMBER 17"/>
    <property type="match status" value="1"/>
</dbReference>
<dbReference type="Pfam" id="PF00005">
    <property type="entry name" value="ABC_tran"/>
    <property type="match status" value="1"/>
</dbReference>
<dbReference type="SMART" id="SM00382">
    <property type="entry name" value="AAA"/>
    <property type="match status" value="1"/>
</dbReference>
<dbReference type="SUPFAM" id="SSF52540">
    <property type="entry name" value="P-loop containing nucleoside triphosphate hydrolases"/>
    <property type="match status" value="1"/>
</dbReference>
<dbReference type="PROSITE" id="PS00211">
    <property type="entry name" value="ABC_TRANSPORTER_1"/>
    <property type="match status" value="1"/>
</dbReference>
<dbReference type="PROSITE" id="PS50893">
    <property type="entry name" value="ABC_TRANSPORTER_2"/>
    <property type="match status" value="1"/>
</dbReference>
<dbReference type="PROSITE" id="PS51238">
    <property type="entry name" value="PSTB"/>
    <property type="match status" value="1"/>
</dbReference>
<name>PSTB_CERS4</name>
<comment type="function">
    <text evidence="1">Part of the ABC transporter complex PstSACB involved in phosphate import. Responsible for energy coupling to the transport system.</text>
</comment>
<comment type="catalytic activity">
    <reaction evidence="1">
        <text>phosphate(out) + ATP + H2O = ADP + 2 phosphate(in) + H(+)</text>
        <dbReference type="Rhea" id="RHEA:24440"/>
        <dbReference type="ChEBI" id="CHEBI:15377"/>
        <dbReference type="ChEBI" id="CHEBI:15378"/>
        <dbReference type="ChEBI" id="CHEBI:30616"/>
        <dbReference type="ChEBI" id="CHEBI:43474"/>
        <dbReference type="ChEBI" id="CHEBI:456216"/>
        <dbReference type="EC" id="7.3.2.1"/>
    </reaction>
</comment>
<comment type="subunit">
    <text evidence="1">The complex is composed of two ATP-binding proteins (PstB), two transmembrane proteins (PstC and PstA) and a solute-binding protein (PstS).</text>
</comment>
<comment type="subcellular location">
    <subcellularLocation>
        <location evidence="1">Cell inner membrane</location>
        <topology evidence="1">Peripheral membrane protein</topology>
    </subcellularLocation>
</comment>
<comment type="similarity">
    <text evidence="1">Belongs to the ABC transporter superfamily. Phosphate importer (TC 3.A.1.7) family.</text>
</comment>
<feature type="chain" id="PRO_0000272510" description="Phosphate import ATP-binding protein PstB">
    <location>
        <begin position="1"/>
        <end position="265"/>
    </location>
</feature>
<feature type="domain" description="ABC transporter" evidence="1">
    <location>
        <begin position="11"/>
        <end position="260"/>
    </location>
</feature>
<feature type="binding site" evidence="1">
    <location>
        <begin position="50"/>
        <end position="57"/>
    </location>
    <ligand>
        <name>ATP</name>
        <dbReference type="ChEBI" id="CHEBI:30616"/>
    </ligand>
</feature>
<gene>
    <name evidence="1" type="primary">pstB</name>
    <name type="ordered locus">RHOS4_11900</name>
    <name type="ORF">RSP_2601</name>
</gene>
<protein>
    <recommendedName>
        <fullName evidence="1">Phosphate import ATP-binding protein PstB</fullName>
        <ecNumber evidence="1">7.3.2.1</ecNumber>
    </recommendedName>
    <alternativeName>
        <fullName evidence="1">ABC phosphate transporter</fullName>
    </alternativeName>
    <alternativeName>
        <fullName evidence="1">Phosphate-transporting ATPase</fullName>
    </alternativeName>
</protein>
<proteinExistence type="inferred from homology"/>
<organism>
    <name type="scientific">Cereibacter sphaeroides (strain ATCC 17023 / DSM 158 / JCM 6121 / CCUG 31486 / LMG 2827 / NBRC 12203 / NCIMB 8253 / ATH 2.4.1.)</name>
    <name type="common">Rhodobacter sphaeroides</name>
    <dbReference type="NCBI Taxonomy" id="272943"/>
    <lineage>
        <taxon>Bacteria</taxon>
        <taxon>Pseudomonadati</taxon>
        <taxon>Pseudomonadota</taxon>
        <taxon>Alphaproteobacteria</taxon>
        <taxon>Rhodobacterales</taxon>
        <taxon>Paracoccaceae</taxon>
        <taxon>Cereibacter</taxon>
    </lineage>
</organism>
<keyword id="KW-0067">ATP-binding</keyword>
<keyword id="KW-0997">Cell inner membrane</keyword>
<keyword id="KW-1003">Cell membrane</keyword>
<keyword id="KW-0472">Membrane</keyword>
<keyword id="KW-0547">Nucleotide-binding</keyword>
<keyword id="KW-0592">Phosphate transport</keyword>
<keyword id="KW-1185">Reference proteome</keyword>
<keyword id="KW-1278">Translocase</keyword>
<keyword id="KW-0813">Transport</keyword>
<accession>Q3J376</accession>